<accession>Q9FN07</accession>
<reference key="1">
    <citation type="journal article" date="1997" name="DNA Res.">
        <title>Structural analysis of Arabidopsis thaliana chromosome 5. III. Sequence features of the regions of 1,191,918 bp covered by seventeen physically assigned P1 clones.</title>
        <authorList>
            <person name="Nakamura Y."/>
            <person name="Sato S."/>
            <person name="Kaneko T."/>
            <person name="Kotani H."/>
            <person name="Asamizu E."/>
            <person name="Miyajima N."/>
            <person name="Tabata S."/>
        </authorList>
    </citation>
    <scope>NUCLEOTIDE SEQUENCE [LARGE SCALE GENOMIC DNA]</scope>
    <source>
        <strain>cv. Columbia</strain>
    </source>
</reference>
<reference key="2">
    <citation type="journal article" date="2017" name="Plant J.">
        <title>Araport11: a complete reannotation of the Arabidopsis thaliana reference genome.</title>
        <authorList>
            <person name="Cheng C.Y."/>
            <person name="Krishnakumar V."/>
            <person name="Chan A.P."/>
            <person name="Thibaud-Nissen F."/>
            <person name="Schobel S."/>
            <person name="Town C.D."/>
        </authorList>
    </citation>
    <scope>GENOME REANNOTATION</scope>
    <source>
        <strain>cv. Columbia</strain>
    </source>
</reference>
<keyword id="KW-1185">Reference proteome</keyword>
<organism>
    <name type="scientific">Arabidopsis thaliana</name>
    <name type="common">Mouse-ear cress</name>
    <dbReference type="NCBI Taxonomy" id="3702"/>
    <lineage>
        <taxon>Eukaryota</taxon>
        <taxon>Viridiplantae</taxon>
        <taxon>Streptophyta</taxon>
        <taxon>Embryophyta</taxon>
        <taxon>Tracheophyta</taxon>
        <taxon>Spermatophyta</taxon>
        <taxon>Magnoliopsida</taxon>
        <taxon>eudicotyledons</taxon>
        <taxon>Gunneridae</taxon>
        <taxon>Pentapetalae</taxon>
        <taxon>rosids</taxon>
        <taxon>malvids</taxon>
        <taxon>Brassicales</taxon>
        <taxon>Brassicaceae</taxon>
        <taxon>Camelineae</taxon>
        <taxon>Arabidopsis</taxon>
    </lineage>
</organism>
<feature type="chain" id="PRO_0000363136" description="UPF0725 protein At5g63820">
    <location>
        <begin position="1"/>
        <end position="225"/>
    </location>
</feature>
<name>Y5638_ARATH</name>
<comment type="similarity">
    <text evidence="1">Belongs to the UPF0725 (EMB2204) family.</text>
</comment>
<proteinExistence type="inferred from homology"/>
<sequence>MAWLIMEEEEVDGIPVNEFGRLEIGFDYGFDFTGIVTPPVSTDYDVTLYAKLGLYCYNFQKGTNLKFVRWEKYNTSTGTAYIDNYITLEAMDPSCNSVFSFQTVFSAAGCYNQDTYHVQDWRVLACRPTCGKSVNEYFDRHEAMDPFYTGKMPKWLSDDALAFDNKKYYVVQESDLHENDWLLVFMEMVFLQEKSCVSSSDHKAIIRKTMDGVPEHMSLEIALVK</sequence>
<dbReference type="EMBL" id="AB007646">
    <property type="protein sequence ID" value="BAB11030.1"/>
    <property type="molecule type" value="Genomic_DNA"/>
</dbReference>
<dbReference type="EMBL" id="CP002688">
    <property type="protein sequence ID" value="AED97801.1"/>
    <property type="molecule type" value="Genomic_DNA"/>
</dbReference>
<dbReference type="RefSeq" id="NP_201187.1">
    <property type="nucleotide sequence ID" value="NM_125777.1"/>
</dbReference>
<dbReference type="SMR" id="Q9FN07"/>
<dbReference type="FunCoup" id="Q9FN07">
    <property type="interactions" value="2"/>
</dbReference>
<dbReference type="PaxDb" id="3702-AT5G63820.1"/>
<dbReference type="EnsemblPlants" id="AT5G63820.1">
    <property type="protein sequence ID" value="AT5G63820.1"/>
    <property type="gene ID" value="AT5G63820"/>
</dbReference>
<dbReference type="GeneID" id="836502"/>
<dbReference type="Gramene" id="AT5G63820.1">
    <property type="protein sequence ID" value="AT5G63820.1"/>
    <property type="gene ID" value="AT5G63820"/>
</dbReference>
<dbReference type="KEGG" id="ath:AT5G63820"/>
<dbReference type="Araport" id="AT5G63820"/>
<dbReference type="TAIR" id="AT5G63820"/>
<dbReference type="HOGENOM" id="CLU_053767_2_0_1"/>
<dbReference type="InParanoid" id="Q9FN07"/>
<dbReference type="OMA" id="MFRIHVS"/>
<dbReference type="PhylomeDB" id="Q9FN07"/>
<dbReference type="PRO" id="PR:Q9FN07"/>
<dbReference type="Proteomes" id="UP000006548">
    <property type="component" value="Chromosome 5"/>
</dbReference>
<dbReference type="ExpressionAtlas" id="Q9FN07">
    <property type="expression patterns" value="baseline and differential"/>
</dbReference>
<dbReference type="InterPro" id="IPR006462">
    <property type="entry name" value="MS5"/>
</dbReference>
<dbReference type="PANTHER" id="PTHR31260:SF74">
    <property type="entry name" value="(RAPE) HYPOTHETICAL PROTEIN"/>
    <property type="match status" value="1"/>
</dbReference>
<dbReference type="PANTHER" id="PTHR31260">
    <property type="entry name" value="CYSTATIN/MONELLIN SUPERFAMILY PROTEIN"/>
    <property type="match status" value="1"/>
</dbReference>
<dbReference type="Pfam" id="PF04776">
    <property type="entry name" value="protein_MS5"/>
    <property type="match status" value="1"/>
</dbReference>
<evidence type="ECO:0000305" key="1"/>
<gene>
    <name type="ordered locus">At5g63820</name>
    <name type="ORF">MGI19.2</name>
</gene>
<protein>
    <recommendedName>
        <fullName>UPF0725 protein At5g63820</fullName>
    </recommendedName>
</protein>